<keyword id="KW-0560">Oxidoreductase</keyword>
<organism>
    <name type="scientific">Streptococcus agalactiae serotype Ia (strain ATCC 27591 / A909 / CDC SS700)</name>
    <dbReference type="NCBI Taxonomy" id="205921"/>
    <lineage>
        <taxon>Bacteria</taxon>
        <taxon>Bacillati</taxon>
        <taxon>Bacillota</taxon>
        <taxon>Bacilli</taxon>
        <taxon>Lactobacillales</taxon>
        <taxon>Streptococcaceae</taxon>
        <taxon>Streptococcus</taxon>
    </lineage>
</organism>
<sequence length="169" mass="19510">MERAIFAGGCFWCMVQPFEELDGIESVLSGYTGGHVENPTYKEVCSKTTGHTEAVEIIFNPEKISYADLVELYWAQTDPTDAFGQFEDRGDNYRPVIFYENEEQRQIAQKSKDKLQASGRFDRPIVTSIEPADTFYPAEDYHQAFYRTNPARYALSSARRHAFLEENWH</sequence>
<reference key="1">
    <citation type="journal article" date="2005" name="Proc. Natl. Acad. Sci. U.S.A.">
        <title>Genome analysis of multiple pathogenic isolates of Streptococcus agalactiae: implications for the microbial 'pan-genome'.</title>
        <authorList>
            <person name="Tettelin H."/>
            <person name="Masignani V."/>
            <person name="Cieslewicz M.J."/>
            <person name="Donati C."/>
            <person name="Medini D."/>
            <person name="Ward N.L."/>
            <person name="Angiuoli S.V."/>
            <person name="Crabtree J."/>
            <person name="Jones A.L."/>
            <person name="Durkin A.S."/>
            <person name="DeBoy R.T."/>
            <person name="Davidsen T.M."/>
            <person name="Mora M."/>
            <person name="Scarselli M."/>
            <person name="Margarit y Ros I."/>
            <person name="Peterson J.D."/>
            <person name="Hauser C.R."/>
            <person name="Sundaram J.P."/>
            <person name="Nelson W.C."/>
            <person name="Madupu R."/>
            <person name="Brinkac L.M."/>
            <person name="Dodson R.J."/>
            <person name="Rosovitz M.J."/>
            <person name="Sullivan S.A."/>
            <person name="Daugherty S.C."/>
            <person name="Haft D.H."/>
            <person name="Selengut J."/>
            <person name="Gwinn M.L."/>
            <person name="Zhou L."/>
            <person name="Zafar N."/>
            <person name="Khouri H."/>
            <person name="Radune D."/>
            <person name="Dimitrov G."/>
            <person name="Watkins K."/>
            <person name="O'Connor K.J."/>
            <person name="Smith S."/>
            <person name="Utterback T.R."/>
            <person name="White O."/>
            <person name="Rubens C.E."/>
            <person name="Grandi G."/>
            <person name="Madoff L.C."/>
            <person name="Kasper D.L."/>
            <person name="Telford J.L."/>
            <person name="Wessels M.R."/>
            <person name="Rappuoli R."/>
            <person name="Fraser C.M."/>
        </authorList>
    </citation>
    <scope>NUCLEOTIDE SEQUENCE [LARGE SCALE GENOMIC DNA]</scope>
    <source>
        <strain>ATCC 27591 / A909 / CDC SS700</strain>
    </source>
</reference>
<protein>
    <recommendedName>
        <fullName evidence="1">Peptide methionine sulfoxide reductase MsrA</fullName>
        <shortName evidence="1">Protein-methionine-S-oxide reductase</shortName>
        <ecNumber evidence="1">1.8.4.11</ecNumber>
    </recommendedName>
    <alternativeName>
        <fullName evidence="1">Peptide-methionine (S)-S-oxide reductase</fullName>
        <shortName evidence="1">Peptide Met(O) reductase</shortName>
    </alternativeName>
</protein>
<dbReference type="EC" id="1.8.4.11" evidence="1"/>
<dbReference type="EMBL" id="CP000114">
    <property type="protein sequence ID" value="ABA45807.1"/>
    <property type="molecule type" value="Genomic_DNA"/>
</dbReference>
<dbReference type="RefSeq" id="WP_000438899.1">
    <property type="nucleotide sequence ID" value="NC_007432.1"/>
</dbReference>
<dbReference type="SMR" id="Q3K013"/>
<dbReference type="GeneID" id="66886365"/>
<dbReference type="KEGG" id="sak:SAK_1534"/>
<dbReference type="HOGENOM" id="CLU_031040_10_1_9"/>
<dbReference type="GO" id="GO:0033744">
    <property type="term" value="F:L-methionine:thioredoxin-disulfide S-oxidoreductase activity"/>
    <property type="evidence" value="ECO:0007669"/>
    <property type="project" value="RHEA"/>
</dbReference>
<dbReference type="GO" id="GO:0008113">
    <property type="term" value="F:peptide-methionine (S)-S-oxide reductase activity"/>
    <property type="evidence" value="ECO:0007669"/>
    <property type="project" value="UniProtKB-UniRule"/>
</dbReference>
<dbReference type="GO" id="GO:0036211">
    <property type="term" value="P:protein modification process"/>
    <property type="evidence" value="ECO:0007669"/>
    <property type="project" value="UniProtKB-UniRule"/>
</dbReference>
<dbReference type="Gene3D" id="3.30.1060.10">
    <property type="entry name" value="Peptide methionine sulphoxide reductase MsrA"/>
    <property type="match status" value="1"/>
</dbReference>
<dbReference type="HAMAP" id="MF_01401">
    <property type="entry name" value="MsrA"/>
    <property type="match status" value="1"/>
</dbReference>
<dbReference type="InterPro" id="IPR002569">
    <property type="entry name" value="Met_Sox_Rdtase_MsrA_dom"/>
</dbReference>
<dbReference type="InterPro" id="IPR036509">
    <property type="entry name" value="Met_Sox_Rdtase_MsrA_sf"/>
</dbReference>
<dbReference type="NCBIfam" id="TIGR00401">
    <property type="entry name" value="msrA"/>
    <property type="match status" value="1"/>
</dbReference>
<dbReference type="PANTHER" id="PTHR43774">
    <property type="entry name" value="PEPTIDE METHIONINE SULFOXIDE REDUCTASE"/>
    <property type="match status" value="1"/>
</dbReference>
<dbReference type="PANTHER" id="PTHR43774:SF1">
    <property type="entry name" value="PEPTIDE METHIONINE SULFOXIDE REDUCTASE MSRA 2"/>
    <property type="match status" value="1"/>
</dbReference>
<dbReference type="Pfam" id="PF01625">
    <property type="entry name" value="PMSR"/>
    <property type="match status" value="1"/>
</dbReference>
<dbReference type="SUPFAM" id="SSF55068">
    <property type="entry name" value="Peptide methionine sulfoxide reductase"/>
    <property type="match status" value="1"/>
</dbReference>
<evidence type="ECO:0000255" key="1">
    <source>
        <dbReference type="HAMAP-Rule" id="MF_01401"/>
    </source>
</evidence>
<comment type="function">
    <text evidence="1">Has an important function as a repair enzyme for proteins that have been inactivated by oxidation. Catalyzes the reversible oxidation-reduction of methionine sulfoxide in proteins to methionine.</text>
</comment>
<comment type="catalytic activity">
    <reaction evidence="1">
        <text>L-methionyl-[protein] + [thioredoxin]-disulfide + H2O = L-methionyl-(S)-S-oxide-[protein] + [thioredoxin]-dithiol</text>
        <dbReference type="Rhea" id="RHEA:14217"/>
        <dbReference type="Rhea" id="RHEA-COMP:10698"/>
        <dbReference type="Rhea" id="RHEA-COMP:10700"/>
        <dbReference type="Rhea" id="RHEA-COMP:12313"/>
        <dbReference type="Rhea" id="RHEA-COMP:12315"/>
        <dbReference type="ChEBI" id="CHEBI:15377"/>
        <dbReference type="ChEBI" id="CHEBI:16044"/>
        <dbReference type="ChEBI" id="CHEBI:29950"/>
        <dbReference type="ChEBI" id="CHEBI:44120"/>
        <dbReference type="ChEBI" id="CHEBI:50058"/>
        <dbReference type="EC" id="1.8.4.11"/>
    </reaction>
</comment>
<comment type="catalytic activity">
    <reaction evidence="1">
        <text>[thioredoxin]-disulfide + L-methionine + H2O = L-methionine (S)-S-oxide + [thioredoxin]-dithiol</text>
        <dbReference type="Rhea" id="RHEA:19993"/>
        <dbReference type="Rhea" id="RHEA-COMP:10698"/>
        <dbReference type="Rhea" id="RHEA-COMP:10700"/>
        <dbReference type="ChEBI" id="CHEBI:15377"/>
        <dbReference type="ChEBI" id="CHEBI:29950"/>
        <dbReference type="ChEBI" id="CHEBI:50058"/>
        <dbReference type="ChEBI" id="CHEBI:57844"/>
        <dbReference type="ChEBI" id="CHEBI:58772"/>
        <dbReference type="EC" id="1.8.4.11"/>
    </reaction>
</comment>
<comment type="similarity">
    <text evidence="1">Belongs to the MsrA Met sulfoxide reductase family.</text>
</comment>
<name>MSRA_STRA1</name>
<accession>Q3K013</accession>
<proteinExistence type="inferred from homology"/>
<feature type="chain" id="PRO_1000068363" description="Peptide methionine sulfoxide reductase MsrA">
    <location>
        <begin position="1"/>
        <end position="169"/>
    </location>
</feature>
<feature type="active site" evidence="1">
    <location>
        <position position="10"/>
    </location>
</feature>
<gene>
    <name evidence="1" type="primary">msrA</name>
    <name type="ordered locus">SAK_1534</name>
</gene>